<accession>B8DFR4</accession>
<proteinExistence type="inferred from homology"/>
<feature type="chain" id="PRO_1000117585" description="Elongation factor Ts">
    <location>
        <begin position="1"/>
        <end position="294"/>
    </location>
</feature>
<feature type="region of interest" description="Involved in Mg(2+) ion dislocation from EF-Tu" evidence="1">
    <location>
        <begin position="80"/>
        <end position="83"/>
    </location>
</feature>
<protein>
    <recommendedName>
        <fullName evidence="1">Elongation factor Ts</fullName>
        <shortName evidence="1">EF-Ts</shortName>
    </recommendedName>
</protein>
<reference key="1">
    <citation type="journal article" date="2011" name="J. Bacteriol.">
        <title>Genome sequence of lineage III Listeria monocytogenes strain HCC23.</title>
        <authorList>
            <person name="Steele C.L."/>
            <person name="Donaldson J.R."/>
            <person name="Paul D."/>
            <person name="Banes M.M."/>
            <person name="Arick T."/>
            <person name="Bridges S.M."/>
            <person name="Lawrence M.L."/>
        </authorList>
    </citation>
    <scope>NUCLEOTIDE SEQUENCE [LARGE SCALE GENOMIC DNA]</scope>
    <source>
        <strain>HCC23</strain>
    </source>
</reference>
<name>EFTS_LISMH</name>
<dbReference type="EMBL" id="CP001175">
    <property type="protein sequence ID" value="ACK39257.1"/>
    <property type="molecule type" value="Genomic_DNA"/>
</dbReference>
<dbReference type="RefSeq" id="WP_003726264.1">
    <property type="nucleotide sequence ID" value="NC_011660.1"/>
</dbReference>
<dbReference type="SMR" id="B8DFR4"/>
<dbReference type="KEGG" id="lmh:LMHCC_0908"/>
<dbReference type="HOGENOM" id="CLU_047155_0_2_9"/>
<dbReference type="GO" id="GO:0005737">
    <property type="term" value="C:cytoplasm"/>
    <property type="evidence" value="ECO:0007669"/>
    <property type="project" value="UniProtKB-SubCell"/>
</dbReference>
<dbReference type="GO" id="GO:0003746">
    <property type="term" value="F:translation elongation factor activity"/>
    <property type="evidence" value="ECO:0007669"/>
    <property type="project" value="UniProtKB-UniRule"/>
</dbReference>
<dbReference type="CDD" id="cd14275">
    <property type="entry name" value="UBA_EF-Ts"/>
    <property type="match status" value="1"/>
</dbReference>
<dbReference type="FunFam" id="1.10.286.20:FF:000003">
    <property type="entry name" value="Elongation factor Ts"/>
    <property type="match status" value="1"/>
</dbReference>
<dbReference type="FunFam" id="1.10.8.10:FF:000001">
    <property type="entry name" value="Elongation factor Ts"/>
    <property type="match status" value="1"/>
</dbReference>
<dbReference type="FunFam" id="3.30.479.20:FF:000005">
    <property type="entry name" value="Elongation factor Ts"/>
    <property type="match status" value="1"/>
</dbReference>
<dbReference type="Gene3D" id="1.10.286.20">
    <property type="match status" value="1"/>
</dbReference>
<dbReference type="Gene3D" id="1.10.8.10">
    <property type="entry name" value="DNA helicase RuvA subunit, C-terminal domain"/>
    <property type="match status" value="1"/>
</dbReference>
<dbReference type="Gene3D" id="3.30.479.20">
    <property type="entry name" value="Elongation factor Ts, dimerisation domain"/>
    <property type="match status" value="2"/>
</dbReference>
<dbReference type="HAMAP" id="MF_00050">
    <property type="entry name" value="EF_Ts"/>
    <property type="match status" value="1"/>
</dbReference>
<dbReference type="InterPro" id="IPR036402">
    <property type="entry name" value="EF-Ts_dimer_sf"/>
</dbReference>
<dbReference type="InterPro" id="IPR001816">
    <property type="entry name" value="Transl_elong_EFTs/EF1B"/>
</dbReference>
<dbReference type="InterPro" id="IPR014039">
    <property type="entry name" value="Transl_elong_EFTs/EF1B_dimer"/>
</dbReference>
<dbReference type="InterPro" id="IPR018101">
    <property type="entry name" value="Transl_elong_Ts_CS"/>
</dbReference>
<dbReference type="InterPro" id="IPR009060">
    <property type="entry name" value="UBA-like_sf"/>
</dbReference>
<dbReference type="NCBIfam" id="TIGR00116">
    <property type="entry name" value="tsf"/>
    <property type="match status" value="1"/>
</dbReference>
<dbReference type="PANTHER" id="PTHR11741">
    <property type="entry name" value="ELONGATION FACTOR TS"/>
    <property type="match status" value="1"/>
</dbReference>
<dbReference type="PANTHER" id="PTHR11741:SF0">
    <property type="entry name" value="ELONGATION FACTOR TS, MITOCHONDRIAL"/>
    <property type="match status" value="1"/>
</dbReference>
<dbReference type="Pfam" id="PF00889">
    <property type="entry name" value="EF_TS"/>
    <property type="match status" value="1"/>
</dbReference>
<dbReference type="SUPFAM" id="SSF54713">
    <property type="entry name" value="Elongation factor Ts (EF-Ts), dimerisation domain"/>
    <property type="match status" value="2"/>
</dbReference>
<dbReference type="SUPFAM" id="SSF46934">
    <property type="entry name" value="UBA-like"/>
    <property type="match status" value="1"/>
</dbReference>
<dbReference type="PROSITE" id="PS01126">
    <property type="entry name" value="EF_TS_1"/>
    <property type="match status" value="1"/>
</dbReference>
<dbReference type="PROSITE" id="PS01127">
    <property type="entry name" value="EF_TS_2"/>
    <property type="match status" value="1"/>
</dbReference>
<keyword id="KW-0963">Cytoplasm</keyword>
<keyword id="KW-0251">Elongation factor</keyword>
<keyword id="KW-0648">Protein biosynthesis</keyword>
<organism>
    <name type="scientific">Listeria monocytogenes serotype 4a (strain HCC23)</name>
    <dbReference type="NCBI Taxonomy" id="552536"/>
    <lineage>
        <taxon>Bacteria</taxon>
        <taxon>Bacillati</taxon>
        <taxon>Bacillota</taxon>
        <taxon>Bacilli</taxon>
        <taxon>Bacillales</taxon>
        <taxon>Listeriaceae</taxon>
        <taxon>Listeria</taxon>
    </lineage>
</organism>
<gene>
    <name evidence="1" type="primary">tsf</name>
    <name type="ordered locus">LMHCC_0908</name>
</gene>
<sequence>MANITAQMVKELREKTGAGMMDCKKALVETEGDMEKAIDYLREKGIAKAAKKSDRVASEGMTHVISNEKHAVVLEVNAETDFVAKNDNFQQLVDALAKQILAVRPDSLEDALKTEMPNGQTVQDYITEAITKIGENISLRRFEVKEKADNSAFGEYIHMNGRIGVLTLLEGTTDTTVAKDVAMHIAAINPKYISREDVSTEEVEHEKEVLTQQALNEGKPANIVEKMVEGRLKKYLSEISLEDQPFVKNPDITVGDYVKQSGGKVVSFVRFEVGEGIEKKEDNFVEEVMSQVKK</sequence>
<evidence type="ECO:0000255" key="1">
    <source>
        <dbReference type="HAMAP-Rule" id="MF_00050"/>
    </source>
</evidence>
<comment type="function">
    <text evidence="1">Associates with the EF-Tu.GDP complex and induces the exchange of GDP to GTP. It remains bound to the aminoacyl-tRNA.EF-Tu.GTP complex up to the GTP hydrolysis stage on the ribosome.</text>
</comment>
<comment type="subcellular location">
    <subcellularLocation>
        <location evidence="1">Cytoplasm</location>
    </subcellularLocation>
</comment>
<comment type="similarity">
    <text evidence="1">Belongs to the EF-Ts family.</text>
</comment>